<accession>A4W512</accession>
<name>RL28_ENT38</name>
<sequence>MSRVCQVTGKRPVTGNNRSHALNATKRRFLPNLHSHRFWVESEKRFVTLRVSAKGMRVIDKKGIDTVLSELRARGEKY</sequence>
<reference key="1">
    <citation type="journal article" date="2010" name="PLoS Genet.">
        <title>Genome sequence of the plant growth promoting endophytic bacterium Enterobacter sp. 638.</title>
        <authorList>
            <person name="Taghavi S."/>
            <person name="van der Lelie D."/>
            <person name="Hoffman A."/>
            <person name="Zhang Y.B."/>
            <person name="Walla M.D."/>
            <person name="Vangronsveld J."/>
            <person name="Newman L."/>
            <person name="Monchy S."/>
        </authorList>
    </citation>
    <scope>NUCLEOTIDE SEQUENCE [LARGE SCALE GENOMIC DNA]</scope>
    <source>
        <strain>638</strain>
    </source>
</reference>
<gene>
    <name evidence="1" type="primary">rpmB</name>
    <name type="ordered locus">Ent638_0102</name>
</gene>
<organism>
    <name type="scientific">Enterobacter sp. (strain 638)</name>
    <dbReference type="NCBI Taxonomy" id="399742"/>
    <lineage>
        <taxon>Bacteria</taxon>
        <taxon>Pseudomonadati</taxon>
        <taxon>Pseudomonadota</taxon>
        <taxon>Gammaproteobacteria</taxon>
        <taxon>Enterobacterales</taxon>
        <taxon>Enterobacteriaceae</taxon>
        <taxon>Enterobacter</taxon>
    </lineage>
</organism>
<protein>
    <recommendedName>
        <fullName evidence="1">Large ribosomal subunit protein bL28</fullName>
    </recommendedName>
    <alternativeName>
        <fullName evidence="2">50S ribosomal protein L28</fullName>
    </alternativeName>
</protein>
<comment type="similarity">
    <text evidence="1">Belongs to the bacterial ribosomal protein bL28 family.</text>
</comment>
<keyword id="KW-0687">Ribonucleoprotein</keyword>
<keyword id="KW-0689">Ribosomal protein</keyword>
<proteinExistence type="inferred from homology"/>
<feature type="chain" id="PRO_1000059951" description="Large ribosomal subunit protein bL28">
    <location>
        <begin position="1"/>
        <end position="78"/>
    </location>
</feature>
<dbReference type="EMBL" id="CP000653">
    <property type="protein sequence ID" value="ABP58792.1"/>
    <property type="molecule type" value="Genomic_DNA"/>
</dbReference>
<dbReference type="RefSeq" id="WP_002436699.1">
    <property type="nucleotide sequence ID" value="NC_009436.1"/>
</dbReference>
<dbReference type="SMR" id="A4W512"/>
<dbReference type="STRING" id="399742.Ent638_0102"/>
<dbReference type="GeneID" id="98390707"/>
<dbReference type="KEGG" id="ent:Ent638_0102"/>
<dbReference type="eggNOG" id="COG0227">
    <property type="taxonomic scope" value="Bacteria"/>
</dbReference>
<dbReference type="HOGENOM" id="CLU_064548_3_1_6"/>
<dbReference type="OrthoDB" id="9805609at2"/>
<dbReference type="Proteomes" id="UP000000230">
    <property type="component" value="Chromosome"/>
</dbReference>
<dbReference type="GO" id="GO:0022625">
    <property type="term" value="C:cytosolic large ribosomal subunit"/>
    <property type="evidence" value="ECO:0007669"/>
    <property type="project" value="TreeGrafter"/>
</dbReference>
<dbReference type="GO" id="GO:0003735">
    <property type="term" value="F:structural constituent of ribosome"/>
    <property type="evidence" value="ECO:0007669"/>
    <property type="project" value="InterPro"/>
</dbReference>
<dbReference type="GO" id="GO:0006412">
    <property type="term" value="P:translation"/>
    <property type="evidence" value="ECO:0007669"/>
    <property type="project" value="UniProtKB-UniRule"/>
</dbReference>
<dbReference type="FunFam" id="2.30.170.40:FF:000001">
    <property type="entry name" value="50S ribosomal protein L28"/>
    <property type="match status" value="1"/>
</dbReference>
<dbReference type="Gene3D" id="2.30.170.40">
    <property type="entry name" value="Ribosomal protein L28/L24"/>
    <property type="match status" value="1"/>
</dbReference>
<dbReference type="HAMAP" id="MF_00373">
    <property type="entry name" value="Ribosomal_bL28"/>
    <property type="match status" value="1"/>
</dbReference>
<dbReference type="InterPro" id="IPR026569">
    <property type="entry name" value="Ribosomal_bL28"/>
</dbReference>
<dbReference type="InterPro" id="IPR034704">
    <property type="entry name" value="Ribosomal_bL28/bL31-like_sf"/>
</dbReference>
<dbReference type="InterPro" id="IPR001383">
    <property type="entry name" value="Ribosomal_bL28_bact-type"/>
</dbReference>
<dbReference type="InterPro" id="IPR037147">
    <property type="entry name" value="Ribosomal_bL28_sf"/>
</dbReference>
<dbReference type="NCBIfam" id="TIGR00009">
    <property type="entry name" value="L28"/>
    <property type="match status" value="1"/>
</dbReference>
<dbReference type="PANTHER" id="PTHR13528">
    <property type="entry name" value="39S RIBOSOMAL PROTEIN L28, MITOCHONDRIAL"/>
    <property type="match status" value="1"/>
</dbReference>
<dbReference type="PANTHER" id="PTHR13528:SF2">
    <property type="entry name" value="LARGE RIBOSOMAL SUBUNIT PROTEIN BL28M"/>
    <property type="match status" value="1"/>
</dbReference>
<dbReference type="Pfam" id="PF00830">
    <property type="entry name" value="Ribosomal_L28"/>
    <property type="match status" value="1"/>
</dbReference>
<dbReference type="SUPFAM" id="SSF143800">
    <property type="entry name" value="L28p-like"/>
    <property type="match status" value="1"/>
</dbReference>
<evidence type="ECO:0000255" key="1">
    <source>
        <dbReference type="HAMAP-Rule" id="MF_00373"/>
    </source>
</evidence>
<evidence type="ECO:0000305" key="2"/>